<proteinExistence type="inferred from homology"/>
<protein>
    <recommendedName>
        <fullName evidence="1">Large ribosomal subunit protein bL33</fullName>
    </recommendedName>
    <alternativeName>
        <fullName evidence="2">50S ribosomal protein L33</fullName>
    </alternativeName>
</protein>
<reference key="1">
    <citation type="journal article" date="2003" name="Genome Res.">
        <title>Comparative complete genome sequence analysis of the amino acid replacements responsible for the thermostability of Corynebacterium efficiens.</title>
        <authorList>
            <person name="Nishio Y."/>
            <person name="Nakamura Y."/>
            <person name="Kawarabayasi Y."/>
            <person name="Usuda Y."/>
            <person name="Kimura E."/>
            <person name="Sugimoto S."/>
            <person name="Matsui K."/>
            <person name="Yamagishi A."/>
            <person name="Kikuchi H."/>
            <person name="Ikeo K."/>
            <person name="Gojobori T."/>
        </authorList>
    </citation>
    <scope>NUCLEOTIDE SEQUENCE [LARGE SCALE GENOMIC DNA]</scope>
    <source>
        <strain>DSM 44549 / YS-314 / AJ 12310 / JCM 11189 / NBRC 100395</strain>
    </source>
</reference>
<evidence type="ECO:0000255" key="1">
    <source>
        <dbReference type="HAMAP-Rule" id="MF_00294"/>
    </source>
</evidence>
<evidence type="ECO:0000305" key="2"/>
<keyword id="KW-1185">Reference proteome</keyword>
<keyword id="KW-0687">Ribonucleoprotein</keyword>
<keyword id="KW-0689">Ribosomal protein</keyword>
<sequence length="54" mass="6473">MARNDIRPIIKLKSTAGTGYTYVTRKNKRNNPDRITLKKFDPVIRKHVEFREER</sequence>
<comment type="similarity">
    <text evidence="1">Belongs to the bacterial ribosomal protein bL33 family.</text>
</comment>
<gene>
    <name evidence="1" type="primary">rpmG</name>
    <name type="ordered locus">CE0942</name>
</gene>
<feature type="chain" id="PRO_1000004159" description="Large ribosomal subunit protein bL33">
    <location>
        <begin position="1"/>
        <end position="54"/>
    </location>
</feature>
<accession>Q8FR25</accession>
<name>RL33_COREF</name>
<dbReference type="EMBL" id="BA000035">
    <property type="protein sequence ID" value="BAC17752.1"/>
    <property type="molecule type" value="Genomic_DNA"/>
</dbReference>
<dbReference type="RefSeq" id="WP_006770093.1">
    <property type="nucleotide sequence ID" value="NC_004369.1"/>
</dbReference>
<dbReference type="SMR" id="Q8FR25"/>
<dbReference type="STRING" id="196164.gene:10741348"/>
<dbReference type="KEGG" id="cef:CE0942"/>
<dbReference type="eggNOG" id="COG0267">
    <property type="taxonomic scope" value="Bacteria"/>
</dbReference>
<dbReference type="HOGENOM" id="CLU_190949_1_1_11"/>
<dbReference type="OrthoDB" id="21586at2"/>
<dbReference type="Proteomes" id="UP000001409">
    <property type="component" value="Chromosome"/>
</dbReference>
<dbReference type="GO" id="GO:0022625">
    <property type="term" value="C:cytosolic large ribosomal subunit"/>
    <property type="evidence" value="ECO:0007669"/>
    <property type="project" value="TreeGrafter"/>
</dbReference>
<dbReference type="GO" id="GO:0003735">
    <property type="term" value="F:structural constituent of ribosome"/>
    <property type="evidence" value="ECO:0007669"/>
    <property type="project" value="InterPro"/>
</dbReference>
<dbReference type="GO" id="GO:0006412">
    <property type="term" value="P:translation"/>
    <property type="evidence" value="ECO:0007669"/>
    <property type="project" value="UniProtKB-UniRule"/>
</dbReference>
<dbReference type="FunFam" id="2.20.28.120:FF:000002">
    <property type="entry name" value="50S ribosomal protein L33"/>
    <property type="match status" value="1"/>
</dbReference>
<dbReference type="Gene3D" id="2.20.28.120">
    <property type="entry name" value="Ribosomal protein L33"/>
    <property type="match status" value="1"/>
</dbReference>
<dbReference type="HAMAP" id="MF_00294">
    <property type="entry name" value="Ribosomal_bL33"/>
    <property type="match status" value="1"/>
</dbReference>
<dbReference type="InterPro" id="IPR001705">
    <property type="entry name" value="Ribosomal_bL33"/>
</dbReference>
<dbReference type="InterPro" id="IPR018264">
    <property type="entry name" value="Ribosomal_bL33_CS"/>
</dbReference>
<dbReference type="InterPro" id="IPR038584">
    <property type="entry name" value="Ribosomal_bL33_sf"/>
</dbReference>
<dbReference type="InterPro" id="IPR011332">
    <property type="entry name" value="Ribosomal_zn-bd"/>
</dbReference>
<dbReference type="NCBIfam" id="NF001860">
    <property type="entry name" value="PRK00595.1"/>
    <property type="match status" value="1"/>
</dbReference>
<dbReference type="NCBIfam" id="TIGR01023">
    <property type="entry name" value="rpmG_bact"/>
    <property type="match status" value="1"/>
</dbReference>
<dbReference type="PANTHER" id="PTHR15238">
    <property type="entry name" value="54S RIBOSOMAL PROTEIN L39, MITOCHONDRIAL"/>
    <property type="match status" value="1"/>
</dbReference>
<dbReference type="PANTHER" id="PTHR15238:SF1">
    <property type="entry name" value="LARGE RIBOSOMAL SUBUNIT PROTEIN BL33M"/>
    <property type="match status" value="1"/>
</dbReference>
<dbReference type="Pfam" id="PF00471">
    <property type="entry name" value="Ribosomal_L33"/>
    <property type="match status" value="1"/>
</dbReference>
<dbReference type="SUPFAM" id="SSF57829">
    <property type="entry name" value="Zn-binding ribosomal proteins"/>
    <property type="match status" value="1"/>
</dbReference>
<dbReference type="PROSITE" id="PS00582">
    <property type="entry name" value="RIBOSOMAL_L33"/>
    <property type="match status" value="1"/>
</dbReference>
<organism>
    <name type="scientific">Corynebacterium efficiens (strain DSM 44549 / YS-314 / AJ 12310 / JCM 11189 / NBRC 100395)</name>
    <dbReference type="NCBI Taxonomy" id="196164"/>
    <lineage>
        <taxon>Bacteria</taxon>
        <taxon>Bacillati</taxon>
        <taxon>Actinomycetota</taxon>
        <taxon>Actinomycetes</taxon>
        <taxon>Mycobacteriales</taxon>
        <taxon>Corynebacteriaceae</taxon>
        <taxon>Corynebacterium</taxon>
    </lineage>
</organism>